<gene>
    <name evidence="1" type="primary">ndhA</name>
    <name type="ordered locus">syc0210_c</name>
</gene>
<feature type="chain" id="PRO_0000240047" description="NAD(P)H-quinone oxidoreductase subunit 1">
    <location>
        <begin position="1"/>
        <end position="372"/>
    </location>
</feature>
<feature type="transmembrane region" description="Helical" evidence="1">
    <location>
        <begin position="27"/>
        <end position="47"/>
    </location>
</feature>
<feature type="transmembrane region" description="Helical" evidence="1">
    <location>
        <begin position="97"/>
        <end position="117"/>
    </location>
</feature>
<feature type="transmembrane region" description="Helical" evidence="1">
    <location>
        <begin position="128"/>
        <end position="148"/>
    </location>
</feature>
<feature type="transmembrane region" description="Helical" evidence="1">
    <location>
        <begin position="176"/>
        <end position="196"/>
    </location>
</feature>
<feature type="transmembrane region" description="Helical" evidence="1">
    <location>
        <begin position="204"/>
        <end position="224"/>
    </location>
</feature>
<feature type="transmembrane region" description="Helical" evidence="1">
    <location>
        <begin position="254"/>
        <end position="274"/>
    </location>
</feature>
<feature type="transmembrane region" description="Helical" evidence="1">
    <location>
        <begin position="308"/>
        <end position="328"/>
    </location>
</feature>
<feature type="transmembrane region" description="Helical" evidence="1">
    <location>
        <begin position="347"/>
        <end position="367"/>
    </location>
</feature>
<dbReference type="EC" id="7.1.1.-" evidence="1"/>
<dbReference type="EMBL" id="AP008231">
    <property type="protein sequence ID" value="BAD78400.1"/>
    <property type="molecule type" value="Genomic_DNA"/>
</dbReference>
<dbReference type="SMR" id="Q5N5L8"/>
<dbReference type="KEGG" id="syc:syc0210_c"/>
<dbReference type="eggNOG" id="COG1005">
    <property type="taxonomic scope" value="Bacteria"/>
</dbReference>
<dbReference type="Proteomes" id="UP000001175">
    <property type="component" value="Chromosome"/>
</dbReference>
<dbReference type="GO" id="GO:0031676">
    <property type="term" value="C:plasma membrane-derived thylakoid membrane"/>
    <property type="evidence" value="ECO:0007669"/>
    <property type="project" value="UniProtKB-SubCell"/>
</dbReference>
<dbReference type="GO" id="GO:0003954">
    <property type="term" value="F:NADH dehydrogenase activity"/>
    <property type="evidence" value="ECO:0007669"/>
    <property type="project" value="TreeGrafter"/>
</dbReference>
<dbReference type="GO" id="GO:0016655">
    <property type="term" value="F:oxidoreductase activity, acting on NAD(P)H, quinone or similar compound as acceptor"/>
    <property type="evidence" value="ECO:0007669"/>
    <property type="project" value="UniProtKB-UniRule"/>
</dbReference>
<dbReference type="GO" id="GO:0048038">
    <property type="term" value="F:quinone binding"/>
    <property type="evidence" value="ECO:0007669"/>
    <property type="project" value="UniProtKB-KW"/>
</dbReference>
<dbReference type="GO" id="GO:0009060">
    <property type="term" value="P:aerobic respiration"/>
    <property type="evidence" value="ECO:0007669"/>
    <property type="project" value="TreeGrafter"/>
</dbReference>
<dbReference type="GO" id="GO:0019684">
    <property type="term" value="P:photosynthesis, light reaction"/>
    <property type="evidence" value="ECO:0007669"/>
    <property type="project" value="UniProtKB-UniRule"/>
</dbReference>
<dbReference type="HAMAP" id="MF_01350">
    <property type="entry name" value="NDH1_NuoH"/>
    <property type="match status" value="1"/>
</dbReference>
<dbReference type="InterPro" id="IPR001694">
    <property type="entry name" value="NADH_UbQ_OxRdtase_su1/FPO"/>
</dbReference>
<dbReference type="InterPro" id="IPR018086">
    <property type="entry name" value="NADH_UbQ_OxRdtase_su1_CS"/>
</dbReference>
<dbReference type="NCBIfam" id="NF004741">
    <property type="entry name" value="PRK06076.1-2"/>
    <property type="match status" value="1"/>
</dbReference>
<dbReference type="NCBIfam" id="NF004744">
    <property type="entry name" value="PRK06076.1-5"/>
    <property type="match status" value="1"/>
</dbReference>
<dbReference type="PANTHER" id="PTHR11432">
    <property type="entry name" value="NADH DEHYDROGENASE SUBUNIT 1"/>
    <property type="match status" value="1"/>
</dbReference>
<dbReference type="PANTHER" id="PTHR11432:SF3">
    <property type="entry name" value="NADH-UBIQUINONE OXIDOREDUCTASE CHAIN 1"/>
    <property type="match status" value="1"/>
</dbReference>
<dbReference type="Pfam" id="PF00146">
    <property type="entry name" value="NADHdh"/>
    <property type="match status" value="1"/>
</dbReference>
<dbReference type="PROSITE" id="PS00667">
    <property type="entry name" value="COMPLEX1_ND1_1"/>
    <property type="match status" value="1"/>
</dbReference>
<dbReference type="PROSITE" id="PS00668">
    <property type="entry name" value="COMPLEX1_ND1_2"/>
    <property type="match status" value="1"/>
</dbReference>
<comment type="function">
    <text evidence="1">NDH-1 shuttles electrons from an unknown electron donor, via FMN and iron-sulfur (Fe-S) centers, to quinones in the respiratory and/or the photosynthetic chain. The immediate electron acceptor for the enzyme in this species is believed to be plastoquinone. Couples the redox reaction to proton translocation, and thus conserves the redox energy in a proton gradient.</text>
</comment>
<comment type="catalytic activity">
    <reaction evidence="1">
        <text>a plastoquinone + NADH + (n+1) H(+)(in) = a plastoquinol + NAD(+) + n H(+)(out)</text>
        <dbReference type="Rhea" id="RHEA:42608"/>
        <dbReference type="Rhea" id="RHEA-COMP:9561"/>
        <dbReference type="Rhea" id="RHEA-COMP:9562"/>
        <dbReference type="ChEBI" id="CHEBI:15378"/>
        <dbReference type="ChEBI" id="CHEBI:17757"/>
        <dbReference type="ChEBI" id="CHEBI:57540"/>
        <dbReference type="ChEBI" id="CHEBI:57945"/>
        <dbReference type="ChEBI" id="CHEBI:62192"/>
    </reaction>
</comment>
<comment type="catalytic activity">
    <reaction evidence="1">
        <text>a plastoquinone + NADPH + (n+1) H(+)(in) = a plastoquinol + NADP(+) + n H(+)(out)</text>
        <dbReference type="Rhea" id="RHEA:42612"/>
        <dbReference type="Rhea" id="RHEA-COMP:9561"/>
        <dbReference type="Rhea" id="RHEA-COMP:9562"/>
        <dbReference type="ChEBI" id="CHEBI:15378"/>
        <dbReference type="ChEBI" id="CHEBI:17757"/>
        <dbReference type="ChEBI" id="CHEBI:57783"/>
        <dbReference type="ChEBI" id="CHEBI:58349"/>
        <dbReference type="ChEBI" id="CHEBI:62192"/>
    </reaction>
</comment>
<comment type="subunit">
    <text evidence="1">NDH-1 is composed of at least 11 different subunits.</text>
</comment>
<comment type="subcellular location">
    <subcellularLocation>
        <location evidence="1">Cellular thylakoid membrane</location>
        <topology evidence="1">Multi-pass membrane protein</topology>
    </subcellularLocation>
</comment>
<comment type="similarity">
    <text evidence="1">Belongs to the complex I subunit 1 family.</text>
</comment>
<keyword id="KW-0472">Membrane</keyword>
<keyword id="KW-0520">NAD</keyword>
<keyword id="KW-0521">NADP</keyword>
<keyword id="KW-0618">Plastoquinone</keyword>
<keyword id="KW-0874">Quinone</keyword>
<keyword id="KW-0793">Thylakoid</keyword>
<keyword id="KW-1278">Translocase</keyword>
<keyword id="KW-0812">Transmembrane</keyword>
<keyword id="KW-1133">Transmembrane helix</keyword>
<protein>
    <recommendedName>
        <fullName evidence="1">NAD(P)H-quinone oxidoreductase subunit 1</fullName>
        <ecNumber evidence="1">7.1.1.-</ecNumber>
    </recommendedName>
    <alternativeName>
        <fullName evidence="1">NAD(P)H dehydrogenase I subunit 1</fullName>
    </alternativeName>
    <alternativeName>
        <fullName evidence="1">NDH-1 subunit 1</fullName>
    </alternativeName>
    <alternativeName>
        <fullName evidence="1">NDH-A</fullName>
    </alternativeName>
</protein>
<organism>
    <name type="scientific">Synechococcus sp. (strain ATCC 27144 / PCC 6301 / SAUG 1402/1)</name>
    <name type="common">Anacystis nidulans</name>
    <dbReference type="NCBI Taxonomy" id="269084"/>
    <lineage>
        <taxon>Bacteria</taxon>
        <taxon>Bacillati</taxon>
        <taxon>Cyanobacteriota</taxon>
        <taxon>Cyanophyceae</taxon>
        <taxon>Synechococcales</taxon>
        <taxon>Synechococcaceae</taxon>
        <taxon>Synechococcus</taxon>
    </lineage>
</organism>
<reference key="1">
    <citation type="journal article" date="2007" name="Photosyn. Res.">
        <title>Complete nucleotide sequence of the freshwater unicellular cyanobacterium Synechococcus elongatus PCC 6301 chromosome: gene content and organization.</title>
        <authorList>
            <person name="Sugita C."/>
            <person name="Ogata K."/>
            <person name="Shikata M."/>
            <person name="Jikuya H."/>
            <person name="Takano J."/>
            <person name="Furumichi M."/>
            <person name="Kanehisa M."/>
            <person name="Omata T."/>
            <person name="Sugiura M."/>
            <person name="Sugita M."/>
        </authorList>
    </citation>
    <scope>NUCLEOTIDE SEQUENCE [LARGE SCALE GENOMIC DNA]</scope>
    <source>
        <strain>ATCC 27144 / PCC 6301 / SAUG 1402/1</strain>
    </source>
</reference>
<accession>Q5N5L8</accession>
<sequence length="372" mass="40364">MDRGIDLQGTFIQSLESLGLSPGLSKVLWMPLPMLLMIIAATVGVLVTVWLERKISAAVQQRIGPEYAGPLGVLQSAADGLKLILKEDIIPAKADAFLFTIGPALVVIPVFLSYLIVPFGQELIITNVGAGVFLWIALSSIQPIGLLMSGYASNNKYSLLGGLRAAAQSISYEIPLALAVLAVVMMSNSLSTIDIVDQQSGYGILGWNIWRQPVGFIIFWIAALAECERLPFDLPEAEEELVAGYQTEYAGMKFALFYVGSYVNLILSALLVSILYLGGWEFPIPLDRVADWIGVDPANPILQITTAALGITMTVLKAYLLVFTAILLRWTVPRVRIDQLLDLGWKFLLPISLVNLLVTAALKLTFPVAFGG</sequence>
<name>NU1C_SYNP6</name>
<evidence type="ECO:0000255" key="1">
    <source>
        <dbReference type="HAMAP-Rule" id="MF_01350"/>
    </source>
</evidence>
<proteinExistence type="inferred from homology"/>